<keyword id="KW-0067">ATP-binding</keyword>
<keyword id="KW-0418">Kinase</keyword>
<keyword id="KW-0441">Lipid A biosynthesis</keyword>
<keyword id="KW-0444">Lipid biosynthesis</keyword>
<keyword id="KW-0443">Lipid metabolism</keyword>
<keyword id="KW-0547">Nucleotide-binding</keyword>
<keyword id="KW-1185">Reference proteome</keyword>
<keyword id="KW-0808">Transferase</keyword>
<proteinExistence type="inferred from homology"/>
<comment type="function">
    <text evidence="1">Transfers the gamma-phosphate of ATP to the 4'-position of a tetraacyldisaccharide 1-phosphate intermediate (termed DS-1-P) to form tetraacyldisaccharide 1,4'-bis-phosphate (lipid IVA).</text>
</comment>
<comment type="catalytic activity">
    <reaction evidence="1">
        <text>a lipid A disaccharide + ATP = a lipid IVA + ADP + H(+)</text>
        <dbReference type="Rhea" id="RHEA:67840"/>
        <dbReference type="ChEBI" id="CHEBI:15378"/>
        <dbReference type="ChEBI" id="CHEBI:30616"/>
        <dbReference type="ChEBI" id="CHEBI:176343"/>
        <dbReference type="ChEBI" id="CHEBI:176425"/>
        <dbReference type="ChEBI" id="CHEBI:456216"/>
        <dbReference type="EC" id="2.7.1.130"/>
    </reaction>
</comment>
<comment type="pathway">
    <text evidence="1">Glycolipid biosynthesis; lipid IV(A) biosynthesis; lipid IV(A) from (3R)-3-hydroxytetradecanoyl-[acyl-carrier-protein] and UDP-N-acetyl-alpha-D-glucosamine: step 6/6.</text>
</comment>
<comment type="similarity">
    <text evidence="1">Belongs to the LpxK family.</text>
</comment>
<reference key="1">
    <citation type="submission" date="2007-10" db="EMBL/GenBank/DDBJ databases">
        <title>Complete sequence of Shewanella pealeana ATCC 700345.</title>
        <authorList>
            <consortium name="US DOE Joint Genome Institute"/>
            <person name="Copeland A."/>
            <person name="Lucas S."/>
            <person name="Lapidus A."/>
            <person name="Barry K."/>
            <person name="Glavina del Rio T."/>
            <person name="Dalin E."/>
            <person name="Tice H."/>
            <person name="Pitluck S."/>
            <person name="Chertkov O."/>
            <person name="Brettin T."/>
            <person name="Bruce D."/>
            <person name="Detter J.C."/>
            <person name="Han C."/>
            <person name="Schmutz J."/>
            <person name="Larimer F."/>
            <person name="Land M."/>
            <person name="Hauser L."/>
            <person name="Kyrpides N."/>
            <person name="Kim E."/>
            <person name="Zhao J.-S.Z."/>
            <person name="Manno D."/>
            <person name="Hawari J."/>
            <person name="Richardson P."/>
        </authorList>
    </citation>
    <scope>NUCLEOTIDE SEQUENCE [LARGE SCALE GENOMIC DNA]</scope>
    <source>
        <strain>ATCC 700345 / ANG-SQ1</strain>
    </source>
</reference>
<feature type="chain" id="PRO_0000340861" description="Tetraacyldisaccharide 4'-kinase">
    <location>
        <begin position="1"/>
        <end position="330"/>
    </location>
</feature>
<feature type="binding site" evidence="1">
    <location>
        <begin position="58"/>
        <end position="65"/>
    </location>
    <ligand>
        <name>ATP</name>
        <dbReference type="ChEBI" id="CHEBI:30616"/>
    </ligand>
</feature>
<gene>
    <name evidence="1" type="primary">lpxK</name>
    <name type="ordered locus">Spea_1771</name>
</gene>
<name>LPXK_SHEPA</name>
<protein>
    <recommendedName>
        <fullName evidence="1">Tetraacyldisaccharide 4'-kinase</fullName>
        <ecNumber evidence="1">2.7.1.130</ecNumber>
    </recommendedName>
    <alternativeName>
        <fullName evidence="1">Lipid A 4'-kinase</fullName>
    </alternativeName>
</protein>
<dbReference type="EC" id="2.7.1.130" evidence="1"/>
<dbReference type="EMBL" id="CP000851">
    <property type="protein sequence ID" value="ABV87094.1"/>
    <property type="molecule type" value="Genomic_DNA"/>
</dbReference>
<dbReference type="RefSeq" id="WP_012155014.1">
    <property type="nucleotide sequence ID" value="NC_009901.1"/>
</dbReference>
<dbReference type="SMR" id="A8H3F7"/>
<dbReference type="STRING" id="398579.Spea_1771"/>
<dbReference type="KEGG" id="spl:Spea_1771"/>
<dbReference type="eggNOG" id="COG1663">
    <property type="taxonomic scope" value="Bacteria"/>
</dbReference>
<dbReference type="HOGENOM" id="CLU_038816_2_0_6"/>
<dbReference type="OrthoDB" id="9766423at2"/>
<dbReference type="UniPathway" id="UPA00359">
    <property type="reaction ID" value="UER00482"/>
</dbReference>
<dbReference type="Proteomes" id="UP000002608">
    <property type="component" value="Chromosome"/>
</dbReference>
<dbReference type="GO" id="GO:0005886">
    <property type="term" value="C:plasma membrane"/>
    <property type="evidence" value="ECO:0007669"/>
    <property type="project" value="TreeGrafter"/>
</dbReference>
<dbReference type="GO" id="GO:0005524">
    <property type="term" value="F:ATP binding"/>
    <property type="evidence" value="ECO:0007669"/>
    <property type="project" value="UniProtKB-UniRule"/>
</dbReference>
<dbReference type="GO" id="GO:0009029">
    <property type="term" value="F:tetraacyldisaccharide 4'-kinase activity"/>
    <property type="evidence" value="ECO:0007669"/>
    <property type="project" value="UniProtKB-UniRule"/>
</dbReference>
<dbReference type="GO" id="GO:0009245">
    <property type="term" value="P:lipid A biosynthetic process"/>
    <property type="evidence" value="ECO:0007669"/>
    <property type="project" value="UniProtKB-UniRule"/>
</dbReference>
<dbReference type="GO" id="GO:0009244">
    <property type="term" value="P:lipopolysaccharide core region biosynthetic process"/>
    <property type="evidence" value="ECO:0007669"/>
    <property type="project" value="TreeGrafter"/>
</dbReference>
<dbReference type="HAMAP" id="MF_00409">
    <property type="entry name" value="LpxK"/>
    <property type="match status" value="1"/>
</dbReference>
<dbReference type="InterPro" id="IPR003758">
    <property type="entry name" value="LpxK"/>
</dbReference>
<dbReference type="InterPro" id="IPR027417">
    <property type="entry name" value="P-loop_NTPase"/>
</dbReference>
<dbReference type="NCBIfam" id="TIGR00682">
    <property type="entry name" value="lpxK"/>
    <property type="match status" value="1"/>
</dbReference>
<dbReference type="PANTHER" id="PTHR42724">
    <property type="entry name" value="TETRAACYLDISACCHARIDE 4'-KINASE"/>
    <property type="match status" value="1"/>
</dbReference>
<dbReference type="PANTHER" id="PTHR42724:SF1">
    <property type="entry name" value="TETRAACYLDISACCHARIDE 4'-KINASE, MITOCHONDRIAL-RELATED"/>
    <property type="match status" value="1"/>
</dbReference>
<dbReference type="Pfam" id="PF02606">
    <property type="entry name" value="LpxK"/>
    <property type="match status" value="1"/>
</dbReference>
<dbReference type="SUPFAM" id="SSF52540">
    <property type="entry name" value="P-loop containing nucleoside triphosphate hydrolases"/>
    <property type="match status" value="1"/>
</dbReference>
<evidence type="ECO:0000255" key="1">
    <source>
        <dbReference type="HAMAP-Rule" id="MF_00409"/>
    </source>
</evidence>
<organism>
    <name type="scientific">Shewanella pealeana (strain ATCC 700345 / ANG-SQ1)</name>
    <dbReference type="NCBI Taxonomy" id="398579"/>
    <lineage>
        <taxon>Bacteria</taxon>
        <taxon>Pseudomonadati</taxon>
        <taxon>Pseudomonadota</taxon>
        <taxon>Gammaproteobacteria</taxon>
        <taxon>Alteromonadales</taxon>
        <taxon>Shewanellaceae</taxon>
        <taxon>Shewanella</taxon>
    </lineage>
</organism>
<accession>A8H3F7</accession>
<sequence length="330" mass="36148">MQSWVNKLWYQSHPLRFALWPLTLLFGAVSWLRRLLFSLGLKKATKLPVPVIIVGNITVGGSGKTPTVIYLIELLRSHGFKPGVISRGYGVEIEGVRSVLPEDKPASVGDEPAMIVSRTAVPMVVGAKRVDAAKHLLAEFDVDIIISDDGLQHYQLARDIELIILDGERRLGNGMLLPAGPLREAAWRLKSVDQVIVNGGIAQSGEQAMLLEPSKWLPVSPVHNGSLPPSQSQPLVAMAGIGNPQRFFDTLQALGYCVEQAQAFDDHSAYSETALNELANGRLLAMTEKDAVKCRDFAKDNWWSLAVDAKLSPSFDKQLLAKIDRLVADK</sequence>